<dbReference type="EMBL" id="AL824706">
    <property type="status" value="NOT_ANNOTATED_CDS"/>
    <property type="molecule type" value="Genomic_DNA"/>
</dbReference>
<dbReference type="CCDS" id="CCDS38751.1">
    <molecule id="B1AXP6-1"/>
</dbReference>
<dbReference type="CCDS" id="CCDS51172.1">
    <molecule id="B1AXP6-3"/>
</dbReference>
<dbReference type="RefSeq" id="NP_001093145.1">
    <molecule id="B1AXP6-1"/>
    <property type="nucleotide sequence ID" value="NM_001099675.1"/>
</dbReference>
<dbReference type="RefSeq" id="NP_001128118.1">
    <molecule id="B1AXP6-3"/>
    <property type="nucleotide sequence ID" value="NM_001134646.1"/>
</dbReference>
<dbReference type="SMR" id="B1AXP6"/>
<dbReference type="FunCoup" id="B1AXP6">
    <property type="interactions" value="1178"/>
</dbReference>
<dbReference type="STRING" id="10090.ENSMUSP00000103438"/>
<dbReference type="iPTMnet" id="B1AXP6"/>
<dbReference type="PhosphoSitePlus" id="B1AXP6"/>
<dbReference type="jPOST" id="B1AXP6"/>
<dbReference type="PaxDb" id="10090-ENSMUSP00000103438"/>
<dbReference type="PeptideAtlas" id="B1AXP6"/>
<dbReference type="ProteomicsDB" id="259492">
    <molecule id="B1AXP6-1"/>
</dbReference>
<dbReference type="ProteomicsDB" id="259493">
    <molecule id="B1AXP6-2"/>
</dbReference>
<dbReference type="ProteomicsDB" id="259494">
    <molecule id="B1AXP6-3"/>
</dbReference>
<dbReference type="ProteomicsDB" id="259495">
    <molecule id="B1AXP6-4"/>
</dbReference>
<dbReference type="Pumba" id="B1AXP6"/>
<dbReference type="Antibodypedia" id="62917">
    <property type="antibodies" value="23 antibodies from 11 providers"/>
</dbReference>
<dbReference type="Ensembl" id="ENSMUST00000107807.2">
    <molecule id="B1AXP6-2"/>
    <property type="protein sequence ID" value="ENSMUSP00000103437.2"/>
    <property type="gene ID" value="ENSMUSG00000078713.9"/>
</dbReference>
<dbReference type="Ensembl" id="ENSMUST00000107808.3">
    <molecule id="B1AXP6-3"/>
    <property type="protein sequence ID" value="ENSMUSP00000103438.3"/>
    <property type="gene ID" value="ENSMUSG00000078713.9"/>
</dbReference>
<dbReference type="Ensembl" id="ENSMUST00000107809.9">
    <molecule id="B1AXP6-4"/>
    <property type="protein sequence ID" value="ENSMUSP00000103439.3"/>
    <property type="gene ID" value="ENSMUSG00000078713.9"/>
</dbReference>
<dbReference type="Ensembl" id="ENSMUST00000107810.3">
    <molecule id="B1AXP6-1"/>
    <property type="protein sequence ID" value="ENSMUSP00000103440.3"/>
    <property type="gene ID" value="ENSMUSG00000078713.9"/>
</dbReference>
<dbReference type="GeneID" id="68512"/>
<dbReference type="KEGG" id="mmu:68512"/>
<dbReference type="UCSC" id="uc008ssh.1">
    <molecule id="B1AXP6-1"/>
    <property type="organism name" value="mouse"/>
</dbReference>
<dbReference type="UCSC" id="uc012ddl.1">
    <molecule id="B1AXP6-3"/>
    <property type="organism name" value="mouse"/>
</dbReference>
<dbReference type="AGR" id="MGI:1915762"/>
<dbReference type="CTD" id="401505"/>
<dbReference type="MGI" id="MGI:1915762">
    <property type="gene designation" value="Tomm5"/>
</dbReference>
<dbReference type="VEuPathDB" id="HostDB:ENSMUSG00000078713"/>
<dbReference type="eggNOG" id="ENOG502S99E">
    <property type="taxonomic scope" value="Eukaryota"/>
</dbReference>
<dbReference type="GeneTree" id="ENSGT00940000164197"/>
<dbReference type="HOGENOM" id="CLU_182400_2_0_1"/>
<dbReference type="InParanoid" id="B1AXP6"/>
<dbReference type="OMA" id="QIYCSSE"/>
<dbReference type="OrthoDB" id="23896at9989"/>
<dbReference type="PhylomeDB" id="B1AXP6"/>
<dbReference type="Reactome" id="R-MMU-5205685">
    <property type="pathway name" value="PINK1-PRKN Mediated Mitophagy"/>
</dbReference>
<dbReference type="BioGRID-ORCS" id="68512">
    <property type="hits" value="5 hits in 74 CRISPR screens"/>
</dbReference>
<dbReference type="ChiTaRS" id="Tomm5">
    <property type="organism name" value="mouse"/>
</dbReference>
<dbReference type="PRO" id="PR:B1AXP6"/>
<dbReference type="Proteomes" id="UP000000589">
    <property type="component" value="Chromosome 4"/>
</dbReference>
<dbReference type="RNAct" id="B1AXP6">
    <property type="molecule type" value="protein"/>
</dbReference>
<dbReference type="Bgee" id="ENSMUSG00000078713">
    <property type="expression patterns" value="Expressed in blastoderm cell in morula and 61 other cell types or tissues"/>
</dbReference>
<dbReference type="GO" id="GO:0005742">
    <property type="term" value="C:mitochondrial outer membrane translocase complex"/>
    <property type="evidence" value="ECO:0000250"/>
    <property type="project" value="UniProtKB"/>
</dbReference>
<dbReference type="GO" id="GO:0005739">
    <property type="term" value="C:mitochondrion"/>
    <property type="evidence" value="ECO:0007005"/>
    <property type="project" value="MGI"/>
</dbReference>
<dbReference type="GO" id="GO:0006626">
    <property type="term" value="P:protein targeting to mitochondrion"/>
    <property type="evidence" value="ECO:0000305"/>
    <property type="project" value="UniProtKB"/>
</dbReference>
<dbReference type="GO" id="GO:0015031">
    <property type="term" value="P:protein transport"/>
    <property type="evidence" value="ECO:0007669"/>
    <property type="project" value="UniProtKB-KW"/>
</dbReference>
<dbReference type="InterPro" id="IPR019603">
    <property type="entry name" value="Tom5"/>
</dbReference>
<dbReference type="InterPro" id="IPR029179">
    <property type="entry name" value="TOMM5_metazoa"/>
</dbReference>
<dbReference type="PANTHER" id="PTHR28436">
    <property type="entry name" value="MITOCHONDRIAL IMPORT RECEPTOR SUBUNIT TOM5 HOMOLOG"/>
    <property type="match status" value="1"/>
</dbReference>
<dbReference type="PANTHER" id="PTHR28436:SF1">
    <property type="entry name" value="MITOCHONDRIAL IMPORT RECEPTOR SUBUNIT TOM5 HOMOLOG"/>
    <property type="match status" value="1"/>
</dbReference>
<dbReference type="Pfam" id="PF10642">
    <property type="entry name" value="Tom5"/>
    <property type="match status" value="1"/>
</dbReference>
<proteinExistence type="inferred from homology"/>
<reference key="1">
    <citation type="journal article" date="2009" name="PLoS Biol.">
        <title>Lineage-specific biology revealed by a finished genome assembly of the mouse.</title>
        <authorList>
            <person name="Church D.M."/>
            <person name="Goodstadt L."/>
            <person name="Hillier L.W."/>
            <person name="Zody M.C."/>
            <person name="Goldstein S."/>
            <person name="She X."/>
            <person name="Bult C.J."/>
            <person name="Agarwala R."/>
            <person name="Cherry J.L."/>
            <person name="DiCuccio M."/>
            <person name="Hlavina W."/>
            <person name="Kapustin Y."/>
            <person name="Meric P."/>
            <person name="Maglott D."/>
            <person name="Birtle Z."/>
            <person name="Marques A.C."/>
            <person name="Graves T."/>
            <person name="Zhou S."/>
            <person name="Teague B."/>
            <person name="Potamousis K."/>
            <person name="Churas C."/>
            <person name="Place M."/>
            <person name="Herschleb J."/>
            <person name="Runnheim R."/>
            <person name="Forrest D."/>
            <person name="Amos-Landgraf J."/>
            <person name="Schwartz D.C."/>
            <person name="Cheng Z."/>
            <person name="Lindblad-Toh K."/>
            <person name="Eichler E.E."/>
            <person name="Ponting C.P."/>
        </authorList>
    </citation>
    <scope>NUCLEOTIDE SEQUENCE [LARGE SCALE GENOMIC DNA]</scope>
    <source>
        <strain>C57BL/6J</strain>
    </source>
</reference>
<gene>
    <name evidence="1" type="primary">Tomm5</name>
    <name evidence="1" type="synonym">Tom5</name>
</gene>
<comment type="subunit">
    <text evidence="1">Forms part of the preprotein translocase complex of the outer mitochondrial membrane (TOM complex) which consists of at least 7 different proteins (TOMM5, TOMM6, TOMM7, TOMM20, TOMM22, TOMM40 and TOMM70).</text>
</comment>
<comment type="subcellular location">
    <subcellularLocation>
        <location evidence="1">Mitochondrion outer membrane</location>
        <topology evidence="1">Single-pass membrane protein</topology>
    </subcellularLocation>
</comment>
<comment type="alternative products">
    <event type="alternative splicing"/>
    <isoform>
        <id>B1AXP6-1</id>
        <name>1</name>
        <sequence type="displayed"/>
    </isoform>
    <isoform>
        <id>B1AXP6-2</id>
        <name>2</name>
        <sequence type="described" ref="VSP_052943"/>
    </isoform>
    <isoform>
        <id>B1AXP6-3</id>
        <name>3</name>
        <sequence type="described" ref="VSP_052944"/>
    </isoform>
    <isoform>
        <id>B1AXP6-4</id>
        <name>4</name>
        <sequence type="described" ref="VSP_052945"/>
    </isoform>
</comment>
<comment type="similarity">
    <text evidence="2">Belongs to the Tom5 family.</text>
</comment>
<feature type="chain" id="PRO_0000351151" description="Mitochondrial import receptor subunit TOM5 homolog">
    <location>
        <begin position="1"/>
        <end position="51"/>
    </location>
</feature>
<feature type="transmembrane region" description="Helical" evidence="2">
    <location>
        <begin position="27"/>
        <end position="45"/>
    </location>
</feature>
<feature type="modified residue" description="N-acetylmethionine" evidence="1">
    <location>
        <position position="1"/>
    </location>
</feature>
<feature type="cross-link" description="Glycyl lysine isopeptide (Lys-Gly) (interchain with G-Cter in SUMO2)" evidence="1">
    <location>
        <position position="10"/>
    </location>
</feature>
<feature type="splice variant" id="VSP_052943" description="In isoform 2." evidence="3">
    <original>VTPYILKKLDSI</original>
    <variation>LHIS</variation>
    <location>
        <begin position="40"/>
        <end position="51"/>
    </location>
</feature>
<feature type="splice variant" id="VSP_052944" description="In isoform 3." evidence="3">
    <original>TPYILKKLDSI</original>
    <variation>KPGMVAHTFNPSTQKAELHIS</variation>
    <location>
        <begin position="41"/>
        <end position="51"/>
    </location>
</feature>
<feature type="splice variant" id="VSP_052945" description="In isoform 4." evidence="3">
    <original>TPYILKKLDSI</original>
    <variation>NQPGLQMEFQDRQGGYTEKSVLKQETFVMCFSACLYVNHVPAVQKGALESLELESSWPLILHIS</variation>
    <location>
        <begin position="41"/>
        <end position="51"/>
    </location>
</feature>
<organism>
    <name type="scientific">Mus musculus</name>
    <name type="common">Mouse</name>
    <dbReference type="NCBI Taxonomy" id="10090"/>
    <lineage>
        <taxon>Eukaryota</taxon>
        <taxon>Metazoa</taxon>
        <taxon>Chordata</taxon>
        <taxon>Craniata</taxon>
        <taxon>Vertebrata</taxon>
        <taxon>Euteleostomi</taxon>
        <taxon>Mammalia</taxon>
        <taxon>Eutheria</taxon>
        <taxon>Euarchontoglires</taxon>
        <taxon>Glires</taxon>
        <taxon>Rodentia</taxon>
        <taxon>Myomorpha</taxon>
        <taxon>Muroidea</taxon>
        <taxon>Muridae</taxon>
        <taxon>Murinae</taxon>
        <taxon>Mus</taxon>
        <taxon>Mus</taxon>
    </lineage>
</organism>
<sequence length="51" mass="6037">MFRIEGLAPKLDPEEMKRKMREDVVSSIRNFLIYVALLRVTPYILKKLDSI</sequence>
<evidence type="ECO:0000250" key="1">
    <source>
        <dbReference type="UniProtKB" id="Q8N4H5"/>
    </source>
</evidence>
<evidence type="ECO:0000255" key="2"/>
<evidence type="ECO:0000305" key="3"/>
<keyword id="KW-0007">Acetylation</keyword>
<keyword id="KW-0025">Alternative splicing</keyword>
<keyword id="KW-1017">Isopeptide bond</keyword>
<keyword id="KW-0472">Membrane</keyword>
<keyword id="KW-0496">Mitochondrion</keyword>
<keyword id="KW-1000">Mitochondrion outer membrane</keyword>
<keyword id="KW-0653">Protein transport</keyword>
<keyword id="KW-1185">Reference proteome</keyword>
<keyword id="KW-0812">Transmembrane</keyword>
<keyword id="KW-1133">Transmembrane helix</keyword>
<keyword id="KW-0813">Transport</keyword>
<keyword id="KW-0832">Ubl conjugation</keyword>
<protein>
    <recommendedName>
        <fullName evidence="1">Mitochondrial import receptor subunit TOM5 homolog</fullName>
    </recommendedName>
</protein>
<accession>B1AXP6</accession>
<accession>B1AXP7</accession>
<accession>B1AXP8</accession>
<accession>B1AXP9</accession>
<name>TOM5_MOUSE</name>